<protein>
    <recommendedName>
        <fullName evidence="1">Phosphatidylglycerol--prolipoprotein diacylglyceryl transferase</fullName>
        <ecNumber evidence="1">2.5.1.145</ecNumber>
    </recommendedName>
</protein>
<dbReference type="EC" id="2.5.1.145" evidence="1"/>
<dbReference type="EMBL" id="CP000270">
    <property type="protein sequence ID" value="ABE29356.1"/>
    <property type="molecule type" value="Genomic_DNA"/>
</dbReference>
<dbReference type="RefSeq" id="WP_007175944.1">
    <property type="nucleotide sequence ID" value="NC_007951.1"/>
</dbReference>
<dbReference type="SMR" id="Q143Y3"/>
<dbReference type="STRING" id="266265.Bxe_A3632"/>
<dbReference type="KEGG" id="bxb:DR64_1325"/>
<dbReference type="KEGG" id="bxe:Bxe_A3632"/>
<dbReference type="eggNOG" id="COG0682">
    <property type="taxonomic scope" value="Bacteria"/>
</dbReference>
<dbReference type="OrthoDB" id="871140at2"/>
<dbReference type="UniPathway" id="UPA00664"/>
<dbReference type="Proteomes" id="UP000001817">
    <property type="component" value="Chromosome 1"/>
</dbReference>
<dbReference type="GO" id="GO:0005886">
    <property type="term" value="C:plasma membrane"/>
    <property type="evidence" value="ECO:0007669"/>
    <property type="project" value="UniProtKB-SubCell"/>
</dbReference>
<dbReference type="GO" id="GO:0008961">
    <property type="term" value="F:phosphatidylglycerol-prolipoprotein diacylglyceryl transferase activity"/>
    <property type="evidence" value="ECO:0007669"/>
    <property type="project" value="UniProtKB-UniRule"/>
</dbReference>
<dbReference type="GO" id="GO:0042158">
    <property type="term" value="P:lipoprotein biosynthetic process"/>
    <property type="evidence" value="ECO:0007669"/>
    <property type="project" value="UniProtKB-UniRule"/>
</dbReference>
<dbReference type="HAMAP" id="MF_01147">
    <property type="entry name" value="Lgt"/>
    <property type="match status" value="1"/>
</dbReference>
<dbReference type="InterPro" id="IPR001640">
    <property type="entry name" value="Lgt"/>
</dbReference>
<dbReference type="NCBIfam" id="TIGR00544">
    <property type="entry name" value="lgt"/>
    <property type="match status" value="1"/>
</dbReference>
<dbReference type="PANTHER" id="PTHR30589:SF0">
    <property type="entry name" value="PHOSPHATIDYLGLYCEROL--PROLIPOPROTEIN DIACYLGLYCERYL TRANSFERASE"/>
    <property type="match status" value="1"/>
</dbReference>
<dbReference type="PANTHER" id="PTHR30589">
    <property type="entry name" value="PROLIPOPROTEIN DIACYLGLYCERYL TRANSFERASE"/>
    <property type="match status" value="1"/>
</dbReference>
<dbReference type="Pfam" id="PF01790">
    <property type="entry name" value="LGT"/>
    <property type="match status" value="1"/>
</dbReference>
<dbReference type="PROSITE" id="PS01311">
    <property type="entry name" value="LGT"/>
    <property type="match status" value="1"/>
</dbReference>
<feature type="chain" id="PRO_1000053407" description="Phosphatidylglycerol--prolipoprotein diacylglyceryl transferase">
    <location>
        <begin position="1"/>
        <end position="301"/>
    </location>
</feature>
<feature type="transmembrane region" description="Helical" evidence="1">
    <location>
        <begin position="17"/>
        <end position="37"/>
    </location>
</feature>
<feature type="transmembrane region" description="Helical" evidence="1">
    <location>
        <begin position="59"/>
        <end position="79"/>
    </location>
</feature>
<feature type="transmembrane region" description="Helical" evidence="1">
    <location>
        <begin position="97"/>
        <end position="117"/>
    </location>
</feature>
<feature type="transmembrane region" description="Helical" evidence="1">
    <location>
        <begin position="230"/>
        <end position="250"/>
    </location>
</feature>
<feature type="transmembrane region" description="Helical" evidence="1">
    <location>
        <begin position="265"/>
        <end position="285"/>
    </location>
</feature>
<feature type="binding site" evidence="1">
    <location>
        <position position="142"/>
    </location>
    <ligand>
        <name>a 1,2-diacyl-sn-glycero-3-phospho-(1'-sn-glycerol)</name>
        <dbReference type="ChEBI" id="CHEBI:64716"/>
    </ligand>
</feature>
<name>LGT_PARXL</name>
<sequence>MLIHPNFDPVAIHLGPLAVRWYGLMYLVAFIAAIVVGRLRLRLPYVAAQGWTAKDIDDMLFYGVLGTILGGRLGYVLFYKASFYFAHPLDIFKVWEGGMSFHGGFLGVTLAMVLFAYQRKRSWLQVTDFVAPMVPTGLAAGRLGNFINGELWGRVTDPSAPWAMLFPGAAPDDAAWLAAHPQLAAQWHLNEVFAQYHMLPRHPSELYEIALEGVALFFVLFFFSRKPKPMGAISAVFLIGYGLARFTVEFAREPDDFLGLLAMGLSMGQWLSLPMILVGIGLLVWSYRRARREPAQAVSAS</sequence>
<gene>
    <name evidence="1" type="primary">lgt</name>
    <name type="ordered locus">Bxeno_A0818</name>
    <name type="ORF">Bxe_A3632</name>
</gene>
<organism>
    <name type="scientific">Paraburkholderia xenovorans (strain LB400)</name>
    <dbReference type="NCBI Taxonomy" id="266265"/>
    <lineage>
        <taxon>Bacteria</taxon>
        <taxon>Pseudomonadati</taxon>
        <taxon>Pseudomonadota</taxon>
        <taxon>Betaproteobacteria</taxon>
        <taxon>Burkholderiales</taxon>
        <taxon>Burkholderiaceae</taxon>
        <taxon>Paraburkholderia</taxon>
    </lineage>
</organism>
<proteinExistence type="inferred from homology"/>
<accession>Q143Y3</accession>
<keyword id="KW-0997">Cell inner membrane</keyword>
<keyword id="KW-1003">Cell membrane</keyword>
<keyword id="KW-0472">Membrane</keyword>
<keyword id="KW-1185">Reference proteome</keyword>
<keyword id="KW-0808">Transferase</keyword>
<keyword id="KW-0812">Transmembrane</keyword>
<keyword id="KW-1133">Transmembrane helix</keyword>
<comment type="function">
    <text evidence="1">Catalyzes the transfer of the diacylglyceryl group from phosphatidylglycerol to the sulfhydryl group of the N-terminal cysteine of a prolipoprotein, the first step in the formation of mature lipoproteins.</text>
</comment>
<comment type="catalytic activity">
    <reaction evidence="1">
        <text>L-cysteinyl-[prolipoprotein] + a 1,2-diacyl-sn-glycero-3-phospho-(1'-sn-glycerol) = an S-1,2-diacyl-sn-glyceryl-L-cysteinyl-[prolipoprotein] + sn-glycerol 1-phosphate + H(+)</text>
        <dbReference type="Rhea" id="RHEA:56712"/>
        <dbReference type="Rhea" id="RHEA-COMP:14679"/>
        <dbReference type="Rhea" id="RHEA-COMP:14680"/>
        <dbReference type="ChEBI" id="CHEBI:15378"/>
        <dbReference type="ChEBI" id="CHEBI:29950"/>
        <dbReference type="ChEBI" id="CHEBI:57685"/>
        <dbReference type="ChEBI" id="CHEBI:64716"/>
        <dbReference type="ChEBI" id="CHEBI:140658"/>
        <dbReference type="EC" id="2.5.1.145"/>
    </reaction>
</comment>
<comment type="pathway">
    <text evidence="1">Protein modification; lipoprotein biosynthesis (diacylglyceryl transfer).</text>
</comment>
<comment type="subcellular location">
    <subcellularLocation>
        <location evidence="1">Cell inner membrane</location>
        <topology evidence="1">Multi-pass membrane protein</topology>
    </subcellularLocation>
</comment>
<comment type="similarity">
    <text evidence="1">Belongs to the Lgt family.</text>
</comment>
<reference key="1">
    <citation type="journal article" date="2006" name="Proc. Natl. Acad. Sci. U.S.A.">
        <title>Burkholderia xenovorans LB400 harbors a multi-replicon, 9.73-Mbp genome shaped for versatility.</title>
        <authorList>
            <person name="Chain P.S.G."/>
            <person name="Denef V.J."/>
            <person name="Konstantinidis K.T."/>
            <person name="Vergez L.M."/>
            <person name="Agullo L."/>
            <person name="Reyes V.L."/>
            <person name="Hauser L."/>
            <person name="Cordova M."/>
            <person name="Gomez L."/>
            <person name="Gonzalez M."/>
            <person name="Land M."/>
            <person name="Lao V."/>
            <person name="Larimer F."/>
            <person name="LiPuma J.J."/>
            <person name="Mahenthiralingam E."/>
            <person name="Malfatti S.A."/>
            <person name="Marx C.J."/>
            <person name="Parnell J.J."/>
            <person name="Ramette A."/>
            <person name="Richardson P."/>
            <person name="Seeger M."/>
            <person name="Smith D."/>
            <person name="Spilker T."/>
            <person name="Sul W.J."/>
            <person name="Tsoi T.V."/>
            <person name="Ulrich L.E."/>
            <person name="Zhulin I.B."/>
            <person name="Tiedje J.M."/>
        </authorList>
    </citation>
    <scope>NUCLEOTIDE SEQUENCE [LARGE SCALE GENOMIC DNA]</scope>
    <source>
        <strain>LB400</strain>
    </source>
</reference>
<evidence type="ECO:0000255" key="1">
    <source>
        <dbReference type="HAMAP-Rule" id="MF_01147"/>
    </source>
</evidence>